<organism>
    <name type="scientific">Schistosoma mansoni</name>
    <name type="common">Blood fluke</name>
    <dbReference type="NCBI Taxonomy" id="6183"/>
    <lineage>
        <taxon>Eukaryota</taxon>
        <taxon>Metazoa</taxon>
        <taxon>Spiralia</taxon>
        <taxon>Lophotrochozoa</taxon>
        <taxon>Platyhelminthes</taxon>
        <taxon>Trematoda</taxon>
        <taxon>Digenea</taxon>
        <taxon>Strigeidida</taxon>
        <taxon>Schistosomatoidea</taxon>
        <taxon>Schistosomatidae</taxon>
        <taxon>Schistosoma</taxon>
    </lineage>
</organism>
<proteinExistence type="evidence at protein level"/>
<feature type="chain" id="PRO_0000145846" description="Phosphoglycerate kinase">
    <location>
        <begin position="1"/>
        <end position="416"/>
    </location>
</feature>
<feature type="binding site" evidence="1">
    <location>
        <position position="22"/>
    </location>
    <ligand>
        <name>(2R)-3-phosphoglycerate</name>
        <dbReference type="ChEBI" id="CHEBI:58272"/>
    </ligand>
</feature>
<feature type="binding site" evidence="2">
    <location>
        <position position="23"/>
    </location>
    <ligand>
        <name>(2R)-3-phosphoglycerate</name>
        <dbReference type="ChEBI" id="CHEBI:58272"/>
    </ligand>
</feature>
<feature type="binding site" evidence="1">
    <location>
        <position position="24"/>
    </location>
    <ligand>
        <name>(2R)-3-phosphoglycerate</name>
        <dbReference type="ChEBI" id="CHEBI:58272"/>
    </ligand>
</feature>
<feature type="binding site" evidence="2">
    <location>
        <position position="25"/>
    </location>
    <ligand>
        <name>(2R)-3-phosphoglycerate</name>
        <dbReference type="ChEBI" id="CHEBI:58272"/>
    </ligand>
</feature>
<feature type="binding site" evidence="1">
    <location>
        <position position="37"/>
    </location>
    <ligand>
        <name>(2R)-3-phosphoglycerate</name>
        <dbReference type="ChEBI" id="CHEBI:58272"/>
    </ligand>
</feature>
<feature type="binding site" evidence="2">
    <location>
        <position position="38"/>
    </location>
    <ligand>
        <name>(2R)-3-phosphoglycerate</name>
        <dbReference type="ChEBI" id="CHEBI:58272"/>
    </ligand>
</feature>
<feature type="binding site" evidence="1">
    <location>
        <position position="61"/>
    </location>
    <ligand>
        <name>(2R)-3-phosphoglycerate</name>
        <dbReference type="ChEBI" id="CHEBI:58272"/>
    </ligand>
</feature>
<feature type="binding site" evidence="2">
    <location>
        <position position="62"/>
    </location>
    <ligand>
        <name>(2R)-3-phosphoglycerate</name>
        <dbReference type="ChEBI" id="CHEBI:58272"/>
    </ligand>
</feature>
<feature type="binding site" evidence="1">
    <location>
        <position position="64"/>
    </location>
    <ligand>
        <name>(2R)-3-phosphoglycerate</name>
        <dbReference type="ChEBI" id="CHEBI:58272"/>
    </ligand>
</feature>
<feature type="binding site" evidence="2">
    <location>
        <position position="65"/>
    </location>
    <ligand>
        <name>(2R)-3-phosphoglycerate</name>
        <dbReference type="ChEBI" id="CHEBI:58272"/>
    </ligand>
</feature>
<feature type="binding site" evidence="1">
    <location>
        <position position="120"/>
    </location>
    <ligand>
        <name>(2R)-3-phosphoglycerate</name>
        <dbReference type="ChEBI" id="CHEBI:58272"/>
    </ligand>
</feature>
<feature type="binding site" evidence="2">
    <location>
        <position position="121"/>
    </location>
    <ligand>
        <name>(2R)-3-phosphoglycerate</name>
        <dbReference type="ChEBI" id="CHEBI:58272"/>
    </ligand>
</feature>
<feature type="binding site" evidence="1">
    <location>
        <position position="168"/>
    </location>
    <ligand>
        <name>(2R)-3-phosphoglycerate</name>
        <dbReference type="ChEBI" id="CHEBI:58272"/>
    </ligand>
</feature>
<feature type="binding site" evidence="2">
    <location>
        <position position="169"/>
    </location>
    <ligand>
        <name>(2R)-3-phosphoglycerate</name>
        <dbReference type="ChEBI" id="CHEBI:58272"/>
    </ligand>
</feature>
<feature type="binding site" evidence="1">
    <location>
        <position position="212"/>
    </location>
    <ligand>
        <name>ADP</name>
        <dbReference type="ChEBI" id="CHEBI:456216"/>
    </ligand>
</feature>
<feature type="binding site" evidence="1">
    <location>
        <position position="212"/>
    </location>
    <ligand>
        <name>CDP</name>
        <dbReference type="ChEBI" id="CHEBI:58069"/>
    </ligand>
</feature>
<feature type="binding site" evidence="2">
    <location>
        <position position="213"/>
    </location>
    <ligand>
        <name>AMP</name>
        <dbReference type="ChEBI" id="CHEBI:456215"/>
    </ligand>
</feature>
<feature type="binding site" evidence="2">
    <location>
        <position position="213"/>
    </location>
    <ligand>
        <name>ATP</name>
        <dbReference type="ChEBI" id="CHEBI:30616"/>
    </ligand>
</feature>
<feature type="binding site" evidence="1">
    <location>
        <position position="213"/>
    </location>
    <ligand>
        <name>Mg(2+)</name>
        <dbReference type="ChEBI" id="CHEBI:18420"/>
    </ligand>
</feature>
<feature type="binding site" evidence="2">
    <location>
        <position position="214"/>
    </location>
    <ligand>
        <name>AMP</name>
        <dbReference type="ChEBI" id="CHEBI:456215"/>
    </ligand>
</feature>
<feature type="binding site" evidence="1">
    <location>
        <position position="217"/>
    </location>
    <ligand>
        <name>CDP</name>
        <dbReference type="ChEBI" id="CHEBI:58069"/>
    </ligand>
</feature>
<feature type="binding site" evidence="1">
    <location>
        <position position="217"/>
    </location>
    <ligand>
        <name>Mg(2+)</name>
        <dbReference type="ChEBI" id="CHEBI:18420"/>
    </ligand>
</feature>
<feature type="binding site" evidence="2">
    <location>
        <position position="218"/>
    </location>
    <ligand>
        <name>AMP</name>
        <dbReference type="ChEBI" id="CHEBI:456215"/>
    </ligand>
</feature>
<feature type="binding site" evidence="2">
    <location>
        <position position="218"/>
    </location>
    <ligand>
        <name>ATP</name>
        <dbReference type="ChEBI" id="CHEBI:30616"/>
    </ligand>
</feature>
<feature type="binding site" evidence="1">
    <location>
        <position position="236"/>
    </location>
    <ligand>
        <name>ADP</name>
        <dbReference type="ChEBI" id="CHEBI:456216"/>
    </ligand>
</feature>
<feature type="binding site" evidence="1">
    <location>
        <position position="236"/>
    </location>
    <ligand>
        <name>CDP</name>
        <dbReference type="ChEBI" id="CHEBI:58069"/>
    </ligand>
</feature>
<feature type="binding site" evidence="2">
    <location>
        <position position="237"/>
    </location>
    <ligand>
        <name>AMP</name>
        <dbReference type="ChEBI" id="CHEBI:456215"/>
    </ligand>
</feature>
<feature type="binding site" evidence="2">
    <location>
        <position position="237"/>
    </location>
    <ligand>
        <name>ATP</name>
        <dbReference type="ChEBI" id="CHEBI:30616"/>
    </ligand>
</feature>
<feature type="binding site" evidence="2">
    <location>
        <position position="311"/>
    </location>
    <ligand>
        <name>AMP</name>
        <dbReference type="ChEBI" id="CHEBI:456215"/>
    </ligand>
</feature>
<feature type="binding site" evidence="2">
    <location>
        <position position="311"/>
    </location>
    <ligand>
        <name>ATP</name>
        <dbReference type="ChEBI" id="CHEBI:30616"/>
    </ligand>
</feature>
<feature type="binding site" evidence="1">
    <location>
        <position position="336"/>
    </location>
    <ligand>
        <name>CDP</name>
        <dbReference type="ChEBI" id="CHEBI:58069"/>
    </ligand>
</feature>
<feature type="binding site" evidence="1">
    <location>
        <position position="341"/>
    </location>
    <ligand>
        <name>ADP</name>
        <dbReference type="ChEBI" id="CHEBI:456216"/>
    </ligand>
</feature>
<feature type="binding site" evidence="1">
    <location>
        <position position="341"/>
    </location>
    <ligand>
        <name>CDP</name>
        <dbReference type="ChEBI" id="CHEBI:58069"/>
    </ligand>
</feature>
<feature type="binding site" evidence="2">
    <location>
        <position position="342"/>
    </location>
    <ligand>
        <name>AMP</name>
        <dbReference type="ChEBI" id="CHEBI:456215"/>
    </ligand>
</feature>
<feature type="binding site" evidence="2">
    <location>
        <position position="342"/>
    </location>
    <ligand>
        <name>ATP</name>
        <dbReference type="ChEBI" id="CHEBI:30616"/>
    </ligand>
</feature>
<feature type="binding site" evidence="2">
    <location>
        <position position="373"/>
    </location>
    <ligand>
        <name>ATP</name>
        <dbReference type="ChEBI" id="CHEBI:30616"/>
    </ligand>
</feature>
<feature type="binding site" evidence="2">
    <location>
        <position position="373"/>
    </location>
    <ligand>
        <name>Mg(2+)</name>
        <dbReference type="ChEBI" id="CHEBI:18420"/>
    </ligand>
</feature>
<feature type="binding site" evidence="2">
    <location>
        <position position="374"/>
    </location>
    <ligand>
        <name>ATP</name>
        <dbReference type="ChEBI" id="CHEBI:30616"/>
    </ligand>
</feature>
<dbReference type="EC" id="2.7.2.3" evidence="3"/>
<dbReference type="EMBL" id="L36833">
    <property type="protein sequence ID" value="AAA93516.1"/>
    <property type="molecule type" value="mRNA"/>
</dbReference>
<dbReference type="SMR" id="P41759"/>
<dbReference type="FunCoup" id="P41759">
    <property type="interactions" value="559"/>
</dbReference>
<dbReference type="STRING" id="6183.P41759"/>
<dbReference type="EnsemblMetazoa" id="Smp_214060.1">
    <property type="protein sequence ID" value="Smp_214060.1"/>
    <property type="gene ID" value="Smp_214060"/>
</dbReference>
<dbReference type="EnsemblMetazoa" id="Smp_307440.1">
    <property type="protein sequence ID" value="Smp_307440.1"/>
    <property type="gene ID" value="Smp_307440"/>
</dbReference>
<dbReference type="WBParaSite" id="Smp_214060.1">
    <property type="protein sequence ID" value="Smp_214060.1"/>
    <property type="gene ID" value="Smp_214060"/>
</dbReference>
<dbReference type="eggNOG" id="KOG1367">
    <property type="taxonomic scope" value="Eukaryota"/>
</dbReference>
<dbReference type="HOGENOM" id="CLU_025427_1_0_1"/>
<dbReference type="InParanoid" id="P41759"/>
<dbReference type="OrthoDB" id="275353at2759"/>
<dbReference type="UniPathway" id="UPA00109">
    <property type="reaction ID" value="UER00185"/>
</dbReference>
<dbReference type="Proteomes" id="UP000008854">
    <property type="component" value="Unassembled WGS sequence"/>
</dbReference>
<dbReference type="ExpressionAtlas" id="P41759">
    <property type="expression patterns" value="baseline and differential"/>
</dbReference>
<dbReference type="GO" id="GO:0005829">
    <property type="term" value="C:cytosol"/>
    <property type="evidence" value="ECO:0007669"/>
    <property type="project" value="TreeGrafter"/>
</dbReference>
<dbReference type="GO" id="GO:0043531">
    <property type="term" value="F:ADP binding"/>
    <property type="evidence" value="ECO:0007669"/>
    <property type="project" value="TreeGrafter"/>
</dbReference>
<dbReference type="GO" id="GO:0005524">
    <property type="term" value="F:ATP binding"/>
    <property type="evidence" value="ECO:0000250"/>
    <property type="project" value="UniProtKB"/>
</dbReference>
<dbReference type="GO" id="GO:0046872">
    <property type="term" value="F:metal ion binding"/>
    <property type="evidence" value="ECO:0007669"/>
    <property type="project" value="UniProtKB-KW"/>
</dbReference>
<dbReference type="GO" id="GO:0004618">
    <property type="term" value="F:phosphoglycerate kinase activity"/>
    <property type="evidence" value="ECO:0000314"/>
    <property type="project" value="UniProtKB"/>
</dbReference>
<dbReference type="GO" id="GO:0006094">
    <property type="term" value="P:gluconeogenesis"/>
    <property type="evidence" value="ECO:0007669"/>
    <property type="project" value="TreeGrafter"/>
</dbReference>
<dbReference type="GO" id="GO:0006096">
    <property type="term" value="P:glycolytic process"/>
    <property type="evidence" value="ECO:0000303"/>
    <property type="project" value="UniProtKB"/>
</dbReference>
<dbReference type="CDD" id="cd00318">
    <property type="entry name" value="Phosphoglycerate_kinase"/>
    <property type="match status" value="1"/>
</dbReference>
<dbReference type="FunFam" id="3.40.50.1260:FF:000005">
    <property type="entry name" value="Phosphoglycerate kinase"/>
    <property type="match status" value="1"/>
</dbReference>
<dbReference type="FunFam" id="3.40.50.1260:FF:000032">
    <property type="entry name" value="Phosphoglycerate kinase"/>
    <property type="match status" value="1"/>
</dbReference>
<dbReference type="FunFam" id="3.40.50.1260:FF:000031">
    <property type="entry name" value="Phosphoglycerate kinase 1"/>
    <property type="match status" value="1"/>
</dbReference>
<dbReference type="Gene3D" id="3.40.50.1260">
    <property type="entry name" value="Phosphoglycerate kinase, N-terminal domain"/>
    <property type="match status" value="3"/>
</dbReference>
<dbReference type="HAMAP" id="MF_00145">
    <property type="entry name" value="Phosphoglyc_kinase"/>
    <property type="match status" value="1"/>
</dbReference>
<dbReference type="InterPro" id="IPR001576">
    <property type="entry name" value="Phosphoglycerate_kinase"/>
</dbReference>
<dbReference type="InterPro" id="IPR015911">
    <property type="entry name" value="Phosphoglycerate_kinase_CS"/>
</dbReference>
<dbReference type="InterPro" id="IPR015824">
    <property type="entry name" value="Phosphoglycerate_kinase_N"/>
</dbReference>
<dbReference type="InterPro" id="IPR036043">
    <property type="entry name" value="Phosphoglycerate_kinase_sf"/>
</dbReference>
<dbReference type="PANTHER" id="PTHR11406">
    <property type="entry name" value="PHOSPHOGLYCERATE KINASE"/>
    <property type="match status" value="1"/>
</dbReference>
<dbReference type="PANTHER" id="PTHR11406:SF0">
    <property type="entry name" value="PHOSPHOGLYCERATE KINASE"/>
    <property type="match status" value="1"/>
</dbReference>
<dbReference type="Pfam" id="PF00162">
    <property type="entry name" value="PGK"/>
    <property type="match status" value="1"/>
</dbReference>
<dbReference type="PIRSF" id="PIRSF000724">
    <property type="entry name" value="Pgk"/>
    <property type="match status" value="1"/>
</dbReference>
<dbReference type="PRINTS" id="PR00477">
    <property type="entry name" value="PHGLYCKINASE"/>
</dbReference>
<dbReference type="SUPFAM" id="SSF53748">
    <property type="entry name" value="Phosphoglycerate kinase"/>
    <property type="match status" value="1"/>
</dbReference>
<dbReference type="PROSITE" id="PS00111">
    <property type="entry name" value="PGLYCERATE_KINASE"/>
    <property type="match status" value="1"/>
</dbReference>
<gene>
    <name type="primary">PGK</name>
</gene>
<sequence>MGLSKLSISDVDLKGKRVLIRVDFNVPMKDGKVTNTQRIAAAIPTIKYALDKGAKSVVLMSHLGRPDGHKVDKYSLKPVCPEVSKLLGKEVTFLNDCVGPDVVNACANPAPGSVFLLENLRFHVEEEGKGVSPTGEKTKATADQIKAFSESLTKLGDVYVNDAFGTAHRAHASMVGCQLPQKACGFLMNKELTYFAKALENPERPFLAILGGAKVSDKIQLINNMLDKVNELIIGGGMAYTFLKQIHNMHIGNSLFDAPGAEIVHKVMETAKAKNVAIHLPVDFVTADKFADDANTEIRTIQSGIADGWMGLDIGPKTIEEFSKVISRAKTIVWNGPMGVFEMDKFATGTKAAMDEVVKATKNGATTIIGGGDTATCCAKWDTEDKVSHVSTGGGASLELLEGKQLPGVVALTDAH</sequence>
<keyword id="KW-0067">ATP-binding</keyword>
<keyword id="KW-0903">Direct protein sequencing</keyword>
<keyword id="KW-0324">Glycolysis</keyword>
<keyword id="KW-0418">Kinase</keyword>
<keyword id="KW-0460">Magnesium</keyword>
<keyword id="KW-0479">Metal-binding</keyword>
<keyword id="KW-0547">Nucleotide-binding</keyword>
<keyword id="KW-1185">Reference proteome</keyword>
<keyword id="KW-0808">Transferase</keyword>
<reference key="1">
    <citation type="journal article" date="1995" name="Mol. Biochem. Parasitol.">
        <title>Cloning of the gene for phosphoglycerate kinase from Schistosoma mansoni and characterization of its gene product.</title>
        <authorList>
            <person name="Lee K.W."/>
            <person name="Shalaby K.A."/>
            <person name="Thakur A."/>
            <person name="Medhat A.M."/>
            <person name="Karim A.M."/>
            <person name="Loverde P.T."/>
        </authorList>
    </citation>
    <scope>NUCLEOTIDE SEQUENCE [MRNA]</scope>
    <scope>PARTIAL PROTEIN SEQUENCE</scope>
    <source>
        <strain>NMRI</strain>
    </source>
</reference>
<evidence type="ECO:0000250" key="1">
    <source>
        <dbReference type="UniProtKB" id="P00558"/>
    </source>
</evidence>
<evidence type="ECO:0000250" key="2">
    <source>
        <dbReference type="UniProtKB" id="Q7SIB7"/>
    </source>
</evidence>
<evidence type="ECO:0000269" key="3">
    <source>
    </source>
</evidence>
<evidence type="ECO:0000303" key="4">
    <source>
    </source>
</evidence>
<evidence type="ECO:0000305" key="5"/>
<evidence type="ECO:0000305" key="6">
    <source>
    </source>
</evidence>
<accession>P41759</accession>
<name>PGK_SCHMA</name>
<protein>
    <recommendedName>
        <fullName evidence="4">Phosphoglycerate kinase</fullName>
        <shortName evidence="4">PGK</shortName>
        <ecNumber evidence="3">2.7.2.3</ecNumber>
    </recommendedName>
</protein>
<comment type="function">
    <text evidence="3 4">Involved in the seventh step in glycolysis (PubMed:7477104). Catalyzes the conversion of 1,3-bisphosphoglycerate ((2R)-3-phospho-glyceroyl phosphate) to 3-phosphoglycerate ((2R)-3-phosphoglycerate) and results in the formation of ATP (PubMed:7477104). Associated with the tegument to provide the energy needed for the tegumental repair resulting from immune damage (PubMed:7477104).</text>
</comment>
<comment type="catalytic activity">
    <reaction evidence="3">
        <text>(2R)-3-phosphoglycerate + ATP = (2R)-3-phospho-glyceroyl phosphate + ADP</text>
        <dbReference type="Rhea" id="RHEA:14801"/>
        <dbReference type="ChEBI" id="CHEBI:30616"/>
        <dbReference type="ChEBI" id="CHEBI:57604"/>
        <dbReference type="ChEBI" id="CHEBI:58272"/>
        <dbReference type="ChEBI" id="CHEBI:456216"/>
        <dbReference type="EC" id="2.7.2.3"/>
    </reaction>
    <physiologicalReaction direction="right-to-left" evidence="6">
        <dbReference type="Rhea" id="RHEA:14803"/>
    </physiologicalReaction>
</comment>
<comment type="cofactor">
    <cofactor evidence="1">
        <name>Mg(2+)</name>
        <dbReference type="ChEBI" id="CHEBI:18420"/>
    </cofactor>
</comment>
<comment type="pathway">
    <text>Carbohydrate degradation; glycolysis; pyruvate from D-glyceraldehyde 3-phosphate: step 2/5.</text>
</comment>
<comment type="subunit">
    <text>Monomer.</text>
</comment>
<comment type="tissue specificity">
    <text evidence="3">Expressed in all cells of the worm (at protein level), higher expression in the cells associated with the tubercles (tegumental modifications), the muscle and along the tegument.</text>
</comment>
<comment type="similarity">
    <text evidence="5">Belongs to the phosphoglycerate kinase family.</text>
</comment>